<reference key="1">
    <citation type="journal article" date="2003" name="Proc. Natl. Acad. Sci. U.S.A.">
        <title>The complete genome sequence of Mycobacterium bovis.</title>
        <authorList>
            <person name="Garnier T."/>
            <person name="Eiglmeier K."/>
            <person name="Camus J.-C."/>
            <person name="Medina N."/>
            <person name="Mansoor H."/>
            <person name="Pryor M."/>
            <person name="Duthoy S."/>
            <person name="Grondin S."/>
            <person name="Lacroix C."/>
            <person name="Monsempe C."/>
            <person name="Simon S."/>
            <person name="Harris B."/>
            <person name="Atkin R."/>
            <person name="Doggett J."/>
            <person name="Mayes R."/>
            <person name="Keating L."/>
            <person name="Wheeler P.R."/>
            <person name="Parkhill J."/>
            <person name="Barrell B.G."/>
            <person name="Cole S.T."/>
            <person name="Gordon S.V."/>
            <person name="Hewinson R.G."/>
        </authorList>
    </citation>
    <scope>NUCLEOTIDE SEQUENCE [LARGE SCALE GENOMIC DNA]</scope>
    <source>
        <strain>ATCC BAA-935 / AF2122/97</strain>
    </source>
</reference>
<reference key="2">
    <citation type="journal article" date="2017" name="Genome Announc.">
        <title>Updated reference genome sequence and annotation of Mycobacterium bovis AF2122/97.</title>
        <authorList>
            <person name="Malone K.M."/>
            <person name="Farrell D."/>
            <person name="Stuber T.P."/>
            <person name="Schubert O.T."/>
            <person name="Aebersold R."/>
            <person name="Robbe-Austerman S."/>
            <person name="Gordon S.V."/>
        </authorList>
    </citation>
    <scope>NUCLEOTIDE SEQUENCE [LARGE SCALE GENOMIC DNA]</scope>
    <scope>GENOME REANNOTATION</scope>
    <source>
        <strain>ATCC BAA-935 / AF2122/97</strain>
    </source>
</reference>
<protein>
    <recommendedName>
        <fullName>Ferredoxin</fullName>
    </recommendedName>
</protein>
<feature type="initiator methionine" description="Removed" evidence="1">
    <location>
        <position position="1"/>
    </location>
</feature>
<feature type="chain" id="PRO_0000159100" description="Ferredoxin">
    <location>
        <begin position="2"/>
        <end position="114"/>
    </location>
</feature>
<feature type="domain" description="4Fe-4S ferredoxin-type" evidence="2">
    <location>
        <begin position="31"/>
        <end position="60"/>
    </location>
</feature>
<feature type="binding site" evidence="1">
    <location>
        <position position="9"/>
    </location>
    <ligand>
        <name>[3Fe-4S] cluster</name>
        <dbReference type="ChEBI" id="CHEBI:21137"/>
    </ligand>
</feature>
<feature type="binding site" evidence="1">
    <location>
        <position position="17"/>
    </location>
    <ligand>
        <name>[3Fe-4S] cluster</name>
        <dbReference type="ChEBI" id="CHEBI:21137"/>
    </ligand>
</feature>
<feature type="binding site" evidence="1">
    <location>
        <position position="21"/>
    </location>
    <ligand>
        <name>[4Fe-4S] cluster</name>
        <dbReference type="ChEBI" id="CHEBI:49883"/>
    </ligand>
</feature>
<feature type="binding site" evidence="1">
    <location>
        <position position="40"/>
    </location>
    <ligand>
        <name>[4Fe-4S] cluster</name>
        <dbReference type="ChEBI" id="CHEBI:49883"/>
    </ligand>
</feature>
<feature type="binding site" evidence="1">
    <location>
        <position position="43"/>
    </location>
    <ligand>
        <name>[4Fe-4S] cluster</name>
        <dbReference type="ChEBI" id="CHEBI:49883"/>
    </ligand>
</feature>
<feature type="binding site" evidence="1">
    <location>
        <position position="46"/>
    </location>
    <ligand>
        <name>[4Fe-4S] cluster</name>
        <dbReference type="ChEBI" id="CHEBI:49883"/>
    </ligand>
</feature>
<feature type="binding site" evidence="1">
    <location>
        <position position="50"/>
    </location>
    <ligand>
        <name>[3Fe-4S] cluster</name>
        <dbReference type="ChEBI" id="CHEBI:21137"/>
    </ligand>
</feature>
<organism>
    <name type="scientific">Mycobacterium bovis (strain ATCC BAA-935 / AF2122/97)</name>
    <dbReference type="NCBI Taxonomy" id="233413"/>
    <lineage>
        <taxon>Bacteria</taxon>
        <taxon>Bacillati</taxon>
        <taxon>Actinomycetota</taxon>
        <taxon>Actinomycetes</taxon>
        <taxon>Mycobacteriales</taxon>
        <taxon>Mycobacteriaceae</taxon>
        <taxon>Mycobacterium</taxon>
        <taxon>Mycobacterium tuberculosis complex</taxon>
    </lineage>
</organism>
<evidence type="ECO:0000250" key="1"/>
<evidence type="ECO:0000255" key="2">
    <source>
        <dbReference type="PROSITE-ProRule" id="PRU00711"/>
    </source>
</evidence>
<comment type="function">
    <text evidence="1">Ferredoxins are iron-sulfur proteins that transfer electrons in a wide variety of metabolic reactions.</text>
</comment>
<comment type="cofactor">
    <cofactor evidence="1">
        <name>[4Fe-4S] cluster</name>
        <dbReference type="ChEBI" id="CHEBI:49883"/>
    </cofactor>
    <text evidence="1">Binds 1 [4Fe-4S] cluster.</text>
</comment>
<comment type="cofactor">
    <cofactor evidence="1">
        <name>[3Fe-4S] cluster</name>
        <dbReference type="ChEBI" id="CHEBI:21137"/>
    </cofactor>
    <text evidence="1">Binds 1 [3Fe-4S] cluster.</text>
</comment>
<name>FER_MYCBO</name>
<gene>
    <name type="primary">fdxA</name>
    <name type="ordered locus">BQ2027_MB2030C</name>
</gene>
<sequence length="114" mass="12064">MTYVIGSECVDVMDKSCVQECPVDCIYEGARMLYINPDECVDCGACKPACRVEAIYWEGDLPDDQHQHLGDNAAFFHQVLPGRVAPLGSPGGAAAVGPIGVDTPLVAAIPVECP</sequence>
<dbReference type="EMBL" id="LT708304">
    <property type="protein sequence ID" value="SIU00637.1"/>
    <property type="molecule type" value="Genomic_DNA"/>
</dbReference>
<dbReference type="RefSeq" id="NP_855680.1">
    <property type="nucleotide sequence ID" value="NC_002945.3"/>
</dbReference>
<dbReference type="RefSeq" id="WP_003410065.1">
    <property type="nucleotide sequence ID" value="NC_002945.4"/>
</dbReference>
<dbReference type="SMR" id="P64123"/>
<dbReference type="GeneID" id="45425987"/>
<dbReference type="KEGG" id="mbo:BQ2027_MB2030C"/>
<dbReference type="PATRIC" id="fig|233413.5.peg.2230"/>
<dbReference type="Proteomes" id="UP000001419">
    <property type="component" value="Chromosome"/>
</dbReference>
<dbReference type="GO" id="GO:0051538">
    <property type="term" value="F:3 iron, 4 sulfur cluster binding"/>
    <property type="evidence" value="ECO:0007669"/>
    <property type="project" value="UniProtKB-KW"/>
</dbReference>
<dbReference type="GO" id="GO:0051539">
    <property type="term" value="F:4 iron, 4 sulfur cluster binding"/>
    <property type="evidence" value="ECO:0007669"/>
    <property type="project" value="UniProtKB-KW"/>
</dbReference>
<dbReference type="GO" id="GO:0009055">
    <property type="term" value="F:electron transfer activity"/>
    <property type="evidence" value="ECO:0007669"/>
    <property type="project" value="InterPro"/>
</dbReference>
<dbReference type="GO" id="GO:0046872">
    <property type="term" value="F:metal ion binding"/>
    <property type="evidence" value="ECO:0007669"/>
    <property type="project" value="UniProtKB-KW"/>
</dbReference>
<dbReference type="FunFam" id="3.30.70.20:FF:000048">
    <property type="entry name" value="Ferredoxin"/>
    <property type="match status" value="1"/>
</dbReference>
<dbReference type="Gene3D" id="3.30.70.20">
    <property type="match status" value="1"/>
</dbReference>
<dbReference type="InterPro" id="IPR017896">
    <property type="entry name" value="4Fe4S_Fe-S-bd"/>
</dbReference>
<dbReference type="InterPro" id="IPR000813">
    <property type="entry name" value="7Fe_ferredoxin"/>
</dbReference>
<dbReference type="InterPro" id="IPR054830">
    <property type="entry name" value="FdxA_Actino"/>
</dbReference>
<dbReference type="InterPro" id="IPR050294">
    <property type="entry name" value="RnfB_subfamily"/>
</dbReference>
<dbReference type="NCBIfam" id="NF045480">
    <property type="entry name" value="FdxA_Actino"/>
    <property type="match status" value="1"/>
</dbReference>
<dbReference type="PANTHER" id="PTHR42859:SF2">
    <property type="entry name" value="FERREDOXIN"/>
    <property type="match status" value="1"/>
</dbReference>
<dbReference type="PANTHER" id="PTHR42859">
    <property type="entry name" value="OXIDOREDUCTASE"/>
    <property type="match status" value="1"/>
</dbReference>
<dbReference type="Pfam" id="PF00037">
    <property type="entry name" value="Fer4"/>
    <property type="match status" value="1"/>
</dbReference>
<dbReference type="PRINTS" id="PR00354">
    <property type="entry name" value="7FE8SFRDOXIN"/>
</dbReference>
<dbReference type="SUPFAM" id="SSF54862">
    <property type="entry name" value="4Fe-4S ferredoxins"/>
    <property type="match status" value="1"/>
</dbReference>
<dbReference type="PROSITE" id="PS51379">
    <property type="entry name" value="4FE4S_FER_2"/>
    <property type="match status" value="1"/>
</dbReference>
<accession>P64123</accession>
<accession>A0A1R3Y0B8</accession>
<accession>Q10839</accession>
<accession>X2BJ89</accession>
<proteinExistence type="inferred from homology"/>
<keyword id="KW-0003">3Fe-4S</keyword>
<keyword id="KW-0004">4Fe-4S</keyword>
<keyword id="KW-0249">Electron transport</keyword>
<keyword id="KW-0408">Iron</keyword>
<keyword id="KW-0411">Iron-sulfur</keyword>
<keyword id="KW-0479">Metal-binding</keyword>
<keyword id="KW-1185">Reference proteome</keyword>
<keyword id="KW-0677">Repeat</keyword>
<keyword id="KW-0813">Transport</keyword>